<protein>
    <recommendedName>
        <fullName evidence="1">FMN-dependent NADH:quinone oxidoreductase</fullName>
        <ecNumber evidence="1">1.6.5.-</ecNumber>
    </recommendedName>
    <alternativeName>
        <fullName evidence="1">Azo-dye reductase</fullName>
    </alternativeName>
    <alternativeName>
        <fullName evidence="1">FMN-dependent NADH-azo compound oxidoreductase</fullName>
    </alternativeName>
    <alternativeName>
        <fullName evidence="1">FMN-dependent NADH-azoreductase</fullName>
        <ecNumber evidence="1">1.7.1.17</ecNumber>
    </alternativeName>
</protein>
<sequence>MKLLHLDSSILGDYSASRQLTASIVAKLQAADPALQYTYRDLAANPIGHLSGAHLAAAQNPPATRTPELANDLALGVQVLQEFLDADTVVIGVALYNFTISTQLKAWIDRVLVAGKTFRYTAEGALEGLAGNKRVILAVARGGRYGEGSPTAALEHAETYMRAALGFVGLHQPEVVVAEGLALGPEARAAGMAAAQAQIDALPV</sequence>
<comment type="function">
    <text evidence="1">Quinone reductase that provides resistance to thiol-specific stress caused by electrophilic quinones.</text>
</comment>
<comment type="function">
    <text evidence="1">Also exhibits azoreductase activity. Catalyzes the reductive cleavage of the azo bond in aromatic azo compounds to the corresponding amines.</text>
</comment>
<comment type="catalytic activity">
    <reaction evidence="1">
        <text>2 a quinone + NADH + H(+) = 2 a 1,4-benzosemiquinone + NAD(+)</text>
        <dbReference type="Rhea" id="RHEA:65952"/>
        <dbReference type="ChEBI" id="CHEBI:15378"/>
        <dbReference type="ChEBI" id="CHEBI:57540"/>
        <dbReference type="ChEBI" id="CHEBI:57945"/>
        <dbReference type="ChEBI" id="CHEBI:132124"/>
        <dbReference type="ChEBI" id="CHEBI:134225"/>
    </reaction>
</comment>
<comment type="catalytic activity">
    <reaction evidence="1">
        <text>N,N-dimethyl-1,4-phenylenediamine + anthranilate + 2 NAD(+) = 2-(4-dimethylaminophenyl)diazenylbenzoate + 2 NADH + 2 H(+)</text>
        <dbReference type="Rhea" id="RHEA:55872"/>
        <dbReference type="ChEBI" id="CHEBI:15378"/>
        <dbReference type="ChEBI" id="CHEBI:15783"/>
        <dbReference type="ChEBI" id="CHEBI:16567"/>
        <dbReference type="ChEBI" id="CHEBI:57540"/>
        <dbReference type="ChEBI" id="CHEBI:57945"/>
        <dbReference type="ChEBI" id="CHEBI:71579"/>
        <dbReference type="EC" id="1.7.1.17"/>
    </reaction>
</comment>
<comment type="cofactor">
    <cofactor evidence="1">
        <name>FMN</name>
        <dbReference type="ChEBI" id="CHEBI:58210"/>
    </cofactor>
    <text evidence="1">Binds 1 FMN per subunit.</text>
</comment>
<comment type="subunit">
    <text evidence="1">Homodimer.</text>
</comment>
<comment type="similarity">
    <text evidence="1">Belongs to the azoreductase type 1 family.</text>
</comment>
<comment type="sequence caution" evidence="2">
    <conflict type="frameshift">
        <sequence resource="EMBL-CDS" id="AAM39357"/>
    </conflict>
</comment>
<accession>P58904</accession>
<organism>
    <name type="scientific">Xanthomonas campestris pv. campestris (strain ATCC 33913 / DSM 3586 / NCPPB 528 / LMG 568 / P 25)</name>
    <dbReference type="NCBI Taxonomy" id="190485"/>
    <lineage>
        <taxon>Bacteria</taxon>
        <taxon>Pseudomonadati</taxon>
        <taxon>Pseudomonadota</taxon>
        <taxon>Gammaproteobacteria</taxon>
        <taxon>Lysobacterales</taxon>
        <taxon>Lysobacteraceae</taxon>
        <taxon>Xanthomonas</taxon>
    </lineage>
</organism>
<feature type="chain" id="PRO_0000166366" description="FMN-dependent NADH:quinone oxidoreductase">
    <location>
        <begin position="1"/>
        <end position="204"/>
    </location>
</feature>
<feature type="binding site" evidence="1">
    <location>
        <position position="9"/>
    </location>
    <ligand>
        <name>FMN</name>
        <dbReference type="ChEBI" id="CHEBI:58210"/>
    </ligand>
</feature>
<feature type="binding site" evidence="1">
    <location>
        <begin position="15"/>
        <end position="17"/>
    </location>
    <ligand>
        <name>FMN</name>
        <dbReference type="ChEBI" id="CHEBI:58210"/>
    </ligand>
</feature>
<keyword id="KW-0285">Flavoprotein</keyword>
<keyword id="KW-0288">FMN</keyword>
<keyword id="KW-0520">NAD</keyword>
<keyword id="KW-0560">Oxidoreductase</keyword>
<keyword id="KW-1185">Reference proteome</keyword>
<reference key="1">
    <citation type="journal article" date="2002" name="Nature">
        <title>Comparison of the genomes of two Xanthomonas pathogens with differing host specificities.</title>
        <authorList>
            <person name="da Silva A.C.R."/>
            <person name="Ferro J.A."/>
            <person name="Reinach F.C."/>
            <person name="Farah C.S."/>
            <person name="Furlan L.R."/>
            <person name="Quaggio R.B."/>
            <person name="Monteiro-Vitorello C.B."/>
            <person name="Van Sluys M.A."/>
            <person name="Almeida N.F. Jr."/>
            <person name="Alves L.M.C."/>
            <person name="do Amaral A.M."/>
            <person name="Bertolini M.C."/>
            <person name="Camargo L.E.A."/>
            <person name="Camarotte G."/>
            <person name="Cannavan F."/>
            <person name="Cardozo J."/>
            <person name="Chambergo F."/>
            <person name="Ciapina L.P."/>
            <person name="Cicarelli R.M.B."/>
            <person name="Coutinho L.L."/>
            <person name="Cursino-Santos J.R."/>
            <person name="El-Dorry H."/>
            <person name="Faria J.B."/>
            <person name="Ferreira A.J.S."/>
            <person name="Ferreira R.C.C."/>
            <person name="Ferro M.I.T."/>
            <person name="Formighieri E.F."/>
            <person name="Franco M.C."/>
            <person name="Greggio C.C."/>
            <person name="Gruber A."/>
            <person name="Katsuyama A.M."/>
            <person name="Kishi L.T."/>
            <person name="Leite R.P."/>
            <person name="Lemos E.G.M."/>
            <person name="Lemos M.V.F."/>
            <person name="Locali E.C."/>
            <person name="Machado M.A."/>
            <person name="Madeira A.M.B.N."/>
            <person name="Martinez-Rossi N.M."/>
            <person name="Martins E.C."/>
            <person name="Meidanis J."/>
            <person name="Menck C.F.M."/>
            <person name="Miyaki C.Y."/>
            <person name="Moon D.H."/>
            <person name="Moreira L.M."/>
            <person name="Novo M.T.M."/>
            <person name="Okura V.K."/>
            <person name="Oliveira M.C."/>
            <person name="Oliveira V.R."/>
            <person name="Pereira H.A."/>
            <person name="Rossi A."/>
            <person name="Sena J.A.D."/>
            <person name="Silva C."/>
            <person name="de Souza R.F."/>
            <person name="Spinola L.A.F."/>
            <person name="Takita M.A."/>
            <person name="Tamura R.E."/>
            <person name="Teixeira E.C."/>
            <person name="Tezza R.I.D."/>
            <person name="Trindade dos Santos M."/>
            <person name="Truffi D."/>
            <person name="Tsai S.M."/>
            <person name="White F.F."/>
            <person name="Setubal J.C."/>
            <person name="Kitajima J.P."/>
        </authorList>
    </citation>
    <scope>NUCLEOTIDE SEQUENCE [LARGE SCALE GENOMIC DNA]</scope>
    <source>
        <strain>ATCC 33913 / DSM 3586 / NCPPB 528 / LMG 568 / P 25</strain>
    </source>
</reference>
<gene>
    <name evidence="1" type="primary">azoR</name>
    <name type="ordered locus">XCC0038</name>
</gene>
<proteinExistence type="inferred from homology"/>
<name>AZOR_XANCP</name>
<evidence type="ECO:0000255" key="1">
    <source>
        <dbReference type="HAMAP-Rule" id="MF_01216"/>
    </source>
</evidence>
<evidence type="ECO:0000305" key="2"/>
<dbReference type="EC" id="1.6.5.-" evidence="1"/>
<dbReference type="EC" id="1.7.1.17" evidence="1"/>
<dbReference type="EMBL" id="AE008922">
    <property type="protein sequence ID" value="AAM39357.1"/>
    <property type="status" value="ALT_FRAME"/>
    <property type="molecule type" value="Genomic_DNA"/>
</dbReference>
<dbReference type="RefSeq" id="NP_635433.1">
    <property type="nucleotide sequence ID" value="NC_003902.1"/>
</dbReference>
<dbReference type="SMR" id="P58904"/>
<dbReference type="STRING" id="190485.XCC0038"/>
<dbReference type="EnsemblBacteria" id="AAM39357">
    <property type="protein sequence ID" value="AAM39357"/>
    <property type="gene ID" value="XCC0038"/>
</dbReference>
<dbReference type="KEGG" id="xcc:XCC0038"/>
<dbReference type="PATRIC" id="fig|190485.4.peg.45"/>
<dbReference type="eggNOG" id="COG1182">
    <property type="taxonomic scope" value="Bacteria"/>
</dbReference>
<dbReference type="HOGENOM" id="CLU_1160729_0_0_6"/>
<dbReference type="OrthoDB" id="9787136at2"/>
<dbReference type="Proteomes" id="UP000001010">
    <property type="component" value="Chromosome"/>
</dbReference>
<dbReference type="GO" id="GO:0009055">
    <property type="term" value="F:electron transfer activity"/>
    <property type="evidence" value="ECO:0007669"/>
    <property type="project" value="UniProtKB-UniRule"/>
</dbReference>
<dbReference type="GO" id="GO:0010181">
    <property type="term" value="F:FMN binding"/>
    <property type="evidence" value="ECO:0007669"/>
    <property type="project" value="UniProtKB-UniRule"/>
</dbReference>
<dbReference type="GO" id="GO:0016652">
    <property type="term" value="F:oxidoreductase activity, acting on NAD(P)H as acceptor"/>
    <property type="evidence" value="ECO:0007669"/>
    <property type="project" value="UniProtKB-UniRule"/>
</dbReference>
<dbReference type="GO" id="GO:0016655">
    <property type="term" value="F:oxidoreductase activity, acting on NAD(P)H, quinone or similar compound as acceptor"/>
    <property type="evidence" value="ECO:0007669"/>
    <property type="project" value="InterPro"/>
</dbReference>
<dbReference type="Gene3D" id="3.40.50.360">
    <property type="match status" value="1"/>
</dbReference>
<dbReference type="HAMAP" id="MF_01216">
    <property type="entry name" value="Azoreductase_type1"/>
    <property type="match status" value="1"/>
</dbReference>
<dbReference type="InterPro" id="IPR003680">
    <property type="entry name" value="Flavodoxin_fold"/>
</dbReference>
<dbReference type="InterPro" id="IPR029039">
    <property type="entry name" value="Flavoprotein-like_sf"/>
</dbReference>
<dbReference type="InterPro" id="IPR050104">
    <property type="entry name" value="FMN-dep_NADH:Q_OxRdtase_AzoR1"/>
</dbReference>
<dbReference type="InterPro" id="IPR023048">
    <property type="entry name" value="NADH:quinone_OxRdtase_FMN_depd"/>
</dbReference>
<dbReference type="PANTHER" id="PTHR43741">
    <property type="entry name" value="FMN-DEPENDENT NADH-AZOREDUCTASE 1"/>
    <property type="match status" value="1"/>
</dbReference>
<dbReference type="PANTHER" id="PTHR43741:SF4">
    <property type="entry name" value="FMN-DEPENDENT NADH:QUINONE OXIDOREDUCTASE"/>
    <property type="match status" value="1"/>
</dbReference>
<dbReference type="Pfam" id="PF02525">
    <property type="entry name" value="Flavodoxin_2"/>
    <property type="match status" value="1"/>
</dbReference>
<dbReference type="SUPFAM" id="SSF52218">
    <property type="entry name" value="Flavoproteins"/>
    <property type="match status" value="1"/>
</dbReference>